<organism evidence="26 27">
    <name type="scientific">Neurospora crassa (strain ATCC 24698 / 74-OR23-1A / CBS 708.71 / DSM 1257 / FGSC 987)</name>
    <dbReference type="NCBI Taxonomy" id="367110"/>
    <lineage>
        <taxon>Eukaryota</taxon>
        <taxon>Fungi</taxon>
        <taxon>Dikarya</taxon>
        <taxon>Ascomycota</taxon>
        <taxon>Pezizomycotina</taxon>
        <taxon>Sordariomycetes</taxon>
        <taxon>Sordariomycetidae</taxon>
        <taxon>Sordariales</taxon>
        <taxon>Sordariaceae</taxon>
        <taxon>Neurospora</taxon>
    </lineage>
</organism>
<comment type="function">
    <text evidence="3 4 6 10 23">Catalyzes the oxidative cleavage of glycosidic bonds in cellulosic substrates via a copper-dependent mechanism (PubMed:22004347, PubMed:22188218, PubMed:24350607, PubMed:31431506). In the presence of an exogenous reductant ascorbic acid, degrades phosphoric acid swollen cellulose (PASC) to cello-oligosaccharides and 4-ketoaldoses, the end products oxidized at the non-reducing end (PubMed:22004347, PubMed:22188218, PubMed:24350607). Somewhat active toward tamarind xyloglucan and konjac glucomannan, with improved activity with glucomannan in the presence of PASC (PubMed:31431506). H(2)O(2) is able to substitute for O(2) in reactions with PASC, xyloglucan and glucomannan (PubMed:31431506). Very weak activity on cellopentaose (PubMed:31431506). No activity with birchwood xylan or ivory nut mannan (PubMed:31431506). Disrupts plant cell wall polysaccharide substrates, such as recalcitrant crystalline cellulose (Probable).</text>
</comment>
<comment type="catalytic activity">
    <reaction evidence="3 4 6 10">
        <text>[(1-&gt;4)-beta-D-glucosyl]n+m + reduced acceptor + O2 = 4-dehydro-beta-D-glucosyl-[(1-&gt;4)-beta-D-glucosyl]n-1 + [(1-&gt;4)-beta-D-glucosyl]m + acceptor + H2O.</text>
        <dbReference type="EC" id="1.14.99.56"/>
    </reaction>
</comment>
<comment type="cofactor">
    <cofactor evidence="3 5 7 8 12">
        <name>Cu(2+)</name>
        <dbReference type="ChEBI" id="CHEBI:29036"/>
    </cofactor>
    <text evidence="3 5 7 8 12">Binds 1 Cu(2+) ion per subunit.</text>
</comment>
<comment type="activity regulation">
    <text evidence="10">Inhibited by increasing levels of ascorbic acid.</text>
</comment>
<comment type="pathway">
    <text evidence="3 4 6 10">Glycan metabolism; cellulose degradation.</text>
</comment>
<comment type="subunit">
    <text evidence="5">Monomer.</text>
</comment>
<comment type="subcellular location">
    <subcellularLocation>
        <location evidence="3 5">Secreted</location>
    </subcellularLocation>
</comment>
<comment type="PTM">
    <text evidence="5 7 8 11 12">N-linked glycans containing mannose and N-acetylglucosamine.</text>
</comment>
<comment type="biotechnology">
    <text evidence="24">May be utilized as part of enzyme mixtures used in the degradation of lignocellulosic biomass for biofuel production or other industrial purposes as it improves efficiency of conventional cellulose-hydrolyzing enzymes.</text>
</comment>
<comment type="similarity">
    <text evidence="17 20 22">Belongs to the polysaccharide monooxygenase AA9 family.</text>
</comment>
<comment type="caution">
    <text evidence="25">Was originally classified in the glycosyl hydrolase 61 family, but is since reclassified in the auxiliary activity 9 (AA9) protein family.</text>
</comment>
<evidence type="ECO:0000255" key="1"/>
<evidence type="ECO:0000255" key="2">
    <source>
        <dbReference type="PROSITE-ProRule" id="PRU00498"/>
    </source>
</evidence>
<evidence type="ECO:0000269" key="3">
    <source>
    </source>
</evidence>
<evidence type="ECO:0000269" key="4">
    <source>
    </source>
</evidence>
<evidence type="ECO:0000269" key="5">
    <source>
    </source>
</evidence>
<evidence type="ECO:0000269" key="6">
    <source>
    </source>
</evidence>
<evidence type="ECO:0000269" key="7">
    <source>
    </source>
</evidence>
<evidence type="ECO:0000269" key="8">
    <source>
    </source>
</evidence>
<evidence type="ECO:0000269" key="9">
    <source>
    </source>
</evidence>
<evidence type="ECO:0000269" key="10">
    <source>
    </source>
</evidence>
<evidence type="ECO:0000269" key="11">
    <source>
    </source>
</evidence>
<evidence type="ECO:0000269" key="12">
    <source>
    </source>
</evidence>
<evidence type="ECO:0000303" key="13">
    <source>
    </source>
</evidence>
<evidence type="ECO:0000303" key="14">
    <source>
    </source>
</evidence>
<evidence type="ECO:0000303" key="15">
    <source>
    </source>
</evidence>
<evidence type="ECO:0000303" key="16">
    <source>
    </source>
</evidence>
<evidence type="ECO:0000303" key="17">
    <source>
    </source>
</evidence>
<evidence type="ECO:0000303" key="18">
    <source>
    </source>
</evidence>
<evidence type="ECO:0000303" key="19">
    <source>
    </source>
</evidence>
<evidence type="ECO:0000303" key="20">
    <source>
    </source>
</evidence>
<evidence type="ECO:0000303" key="21">
    <source>
    </source>
</evidence>
<evidence type="ECO:0000303" key="22">
    <source>
    </source>
</evidence>
<evidence type="ECO:0000305" key="23"/>
<evidence type="ECO:0000305" key="24">
    <source>
    </source>
</evidence>
<evidence type="ECO:0000305" key="25">
    <source>
    </source>
</evidence>
<evidence type="ECO:0000312" key="26">
    <source>
        <dbReference type="EMBL" id="EAA32426.1"/>
    </source>
</evidence>
<evidence type="ECO:0000312" key="27">
    <source>
        <dbReference type="Proteomes" id="UP000001805"/>
    </source>
</evidence>
<evidence type="ECO:0007744" key="28">
    <source>
        <dbReference type="PDB" id="4EIR"/>
    </source>
</evidence>
<evidence type="ECO:0007744" key="29">
    <source>
        <dbReference type="PDB" id="5TKF"/>
    </source>
</evidence>
<evidence type="ECO:0007744" key="30">
    <source>
        <dbReference type="PDB" id="5TKG"/>
    </source>
</evidence>
<evidence type="ECO:0007744" key="31">
    <source>
        <dbReference type="PDB" id="5TKH"/>
    </source>
</evidence>
<evidence type="ECO:0007744" key="32">
    <source>
        <dbReference type="PDB" id="5TKI"/>
    </source>
</evidence>
<evidence type="ECO:0007744" key="33">
    <source>
        <dbReference type="PDB" id="7T5C"/>
    </source>
</evidence>
<evidence type="ECO:0007744" key="34">
    <source>
        <dbReference type="PDB" id="7T5D"/>
    </source>
</evidence>
<evidence type="ECO:0007744" key="35">
    <source>
        <dbReference type="PDB" id="7T5E"/>
    </source>
</evidence>
<evidence type="ECO:0007829" key="36">
    <source>
        <dbReference type="PDB" id="4EIR"/>
    </source>
</evidence>
<evidence type="ECO:0007829" key="37">
    <source>
        <dbReference type="PDB" id="5TKH"/>
    </source>
</evidence>
<feature type="signal peptide" evidence="1">
    <location>
        <begin position="1"/>
        <end position="15"/>
    </location>
</feature>
<feature type="chain" id="PRO_5013266137" description="Lytic polysaccharide monooxygenase NCU01050" evidence="1">
    <location>
        <begin position="16"/>
        <end position="238"/>
    </location>
</feature>
<feature type="active site" description="Proton donor" evidence="12">
    <location>
        <position position="172"/>
    </location>
</feature>
<feature type="binding site" evidence="5 7 8 12 28 29 30 31 32 33 34 35">
    <location>
        <position position="16"/>
    </location>
    <ligand>
        <name>Cu(2+)</name>
        <dbReference type="ChEBI" id="CHEBI:29036"/>
        <note>catalytic</note>
    </ligand>
</feature>
<feature type="binding site" evidence="7 8 12 30 31 34">
    <location>
        <position position="45"/>
    </location>
    <ligand>
        <name>O2</name>
        <dbReference type="ChEBI" id="CHEBI:15379"/>
    </ligand>
</feature>
<feature type="binding site" evidence="5 7 8 12 28 29 30 31 32 33 34 35">
    <location>
        <position position="99"/>
    </location>
    <ligand>
        <name>Cu(2+)</name>
        <dbReference type="ChEBI" id="CHEBI:29036"/>
        <note>catalytic</note>
    </ligand>
</feature>
<feature type="binding site" evidence="7 8 12 29 30 31 34">
    <location>
        <position position="172"/>
    </location>
    <ligand>
        <name>O2</name>
        <dbReference type="ChEBI" id="CHEBI:15379"/>
    </ligand>
</feature>
<feature type="binding site" evidence="7 8 12 29 30 31 34">
    <location>
        <position position="181"/>
    </location>
    <ligand>
        <name>O2</name>
        <dbReference type="ChEBI" id="CHEBI:15379"/>
    </ligand>
</feature>
<feature type="binding site" evidence="7 8 12 29 30 31 32 33 34 35">
    <location>
        <position position="183"/>
    </location>
    <ligand>
        <name>Cu(2+)</name>
        <dbReference type="ChEBI" id="CHEBI:29036"/>
        <note>catalytic</note>
    </ligand>
</feature>
<feature type="site" description="Promotes oxygen activation" evidence="7 9">
    <location>
        <position position="172"/>
    </location>
</feature>
<feature type="glycosylation site" description="N-linked (GlcNAc...) asparagine" evidence="2 5 7 8 12 28 29 30 31 32 33 34 35">
    <location>
        <position position="75"/>
    </location>
</feature>
<feature type="disulfide bond" evidence="5 7 8 12 28 29 30 31 32 33 34 35">
    <location>
        <begin position="54"/>
        <end position="186"/>
    </location>
</feature>
<feature type="disulfide bond" evidence="5 7 8 12 28 29 30 31 32 33 34 35">
    <location>
        <begin position="156"/>
        <end position="238"/>
    </location>
</feature>
<feature type="mutagenesis site" description="Loss of glycosylation." evidence="8">
    <original>N</original>
    <variation>D</variation>
    <location>
        <position position="75"/>
    </location>
</feature>
<feature type="strand" evidence="36">
    <location>
        <begin position="18"/>
        <end position="24"/>
    </location>
</feature>
<feature type="strand" evidence="36">
    <location>
        <begin position="33"/>
        <end position="35"/>
    </location>
</feature>
<feature type="strand" evidence="36">
    <location>
        <begin position="38"/>
        <end position="40"/>
    </location>
</feature>
<feature type="helix" evidence="36">
    <location>
        <begin position="50"/>
        <end position="52"/>
    </location>
</feature>
<feature type="strand" evidence="36">
    <location>
        <begin position="68"/>
        <end position="71"/>
    </location>
</feature>
<feature type="strand" evidence="36">
    <location>
        <begin position="74"/>
        <end position="83"/>
    </location>
</feature>
<feature type="helix" evidence="36">
    <location>
        <begin position="91"/>
        <end position="93"/>
    </location>
</feature>
<feature type="strand" evidence="36">
    <location>
        <begin position="103"/>
        <end position="109"/>
    </location>
</feature>
<feature type="turn" evidence="36">
    <location>
        <begin position="113"/>
        <end position="115"/>
    </location>
</feature>
<feature type="strand" evidence="36">
    <location>
        <begin position="120"/>
        <end position="129"/>
    </location>
</feature>
<feature type="helix" evidence="36">
    <location>
        <begin position="138"/>
        <end position="143"/>
    </location>
</feature>
<feature type="turn" evidence="36">
    <location>
        <begin position="144"/>
        <end position="147"/>
    </location>
</feature>
<feature type="strand" evidence="36">
    <location>
        <begin position="148"/>
        <end position="152"/>
    </location>
</feature>
<feature type="strand" evidence="37">
    <location>
        <begin position="155"/>
        <end position="157"/>
    </location>
</feature>
<feature type="strand" evidence="36">
    <location>
        <begin position="160"/>
        <end position="170"/>
    </location>
</feature>
<feature type="strand" evidence="36">
    <location>
        <begin position="175"/>
        <end position="178"/>
    </location>
</feature>
<feature type="strand" evidence="36">
    <location>
        <begin position="181"/>
        <end position="193"/>
    </location>
</feature>
<feature type="strand" evidence="36">
    <location>
        <begin position="203"/>
        <end position="205"/>
    </location>
</feature>
<feature type="turn" evidence="36">
    <location>
        <begin position="214"/>
        <end position="216"/>
    </location>
</feature>
<feature type="turn" evidence="36">
    <location>
        <begin position="221"/>
        <end position="224"/>
    </location>
</feature>
<feature type="strand" evidence="36">
    <location>
        <begin position="231"/>
        <end position="233"/>
    </location>
</feature>
<reference evidence="26 27" key="1">
    <citation type="journal article" date="2003" name="Nature">
        <title>The genome sequence of the filamentous fungus Neurospora crassa.</title>
        <authorList>
            <person name="Galagan J.E."/>
            <person name="Calvo S.E."/>
            <person name="Borkovich K.A."/>
            <person name="Selker E.U."/>
            <person name="Read N.D."/>
            <person name="Jaffe D.B."/>
            <person name="FitzHugh W."/>
            <person name="Ma L.-J."/>
            <person name="Smirnov S."/>
            <person name="Purcell S."/>
            <person name="Rehman B."/>
            <person name="Elkins T."/>
            <person name="Engels R."/>
            <person name="Wang S."/>
            <person name="Nielsen C.B."/>
            <person name="Butler J."/>
            <person name="Endrizzi M."/>
            <person name="Qui D."/>
            <person name="Ianakiev P."/>
            <person name="Bell-Pedersen D."/>
            <person name="Nelson M.A."/>
            <person name="Werner-Washburne M."/>
            <person name="Selitrennikoff C.P."/>
            <person name="Kinsey J.A."/>
            <person name="Braun E.L."/>
            <person name="Zelter A."/>
            <person name="Schulte U."/>
            <person name="Kothe G.O."/>
            <person name="Jedd G."/>
            <person name="Mewes H.-W."/>
            <person name="Staben C."/>
            <person name="Marcotte E."/>
            <person name="Greenberg D."/>
            <person name="Roy A."/>
            <person name="Foley K."/>
            <person name="Naylor J."/>
            <person name="Stange-Thomann N."/>
            <person name="Barrett R."/>
            <person name="Gnerre S."/>
            <person name="Kamal M."/>
            <person name="Kamvysselis M."/>
            <person name="Mauceli E.W."/>
            <person name="Bielke C."/>
            <person name="Rudd S."/>
            <person name="Frishman D."/>
            <person name="Krystofova S."/>
            <person name="Rasmussen C."/>
            <person name="Metzenberg R.L."/>
            <person name="Perkins D.D."/>
            <person name="Kroken S."/>
            <person name="Cogoni C."/>
            <person name="Macino G."/>
            <person name="Catcheside D.E.A."/>
            <person name="Li W."/>
            <person name="Pratt R.J."/>
            <person name="Osmani S.A."/>
            <person name="DeSouza C.P.C."/>
            <person name="Glass N.L."/>
            <person name="Orbach M.J."/>
            <person name="Berglund J.A."/>
            <person name="Voelker R."/>
            <person name="Yarden O."/>
            <person name="Plamann M."/>
            <person name="Seiler S."/>
            <person name="Dunlap J.C."/>
            <person name="Radford A."/>
            <person name="Aramayo R."/>
            <person name="Natvig D.O."/>
            <person name="Alex L.A."/>
            <person name="Mannhaupt G."/>
            <person name="Ebbole D.J."/>
            <person name="Freitag M."/>
            <person name="Paulsen I."/>
            <person name="Sachs M.S."/>
            <person name="Lander E.S."/>
            <person name="Nusbaum C."/>
            <person name="Birren B.W."/>
        </authorList>
    </citation>
    <scope>NUCLEOTIDE SEQUENCE [LARGE SCALE GENOMIC DNA]</scope>
    <source>
        <strain>ATCC 24698 / 74-OR23-1A / CBS 708.71 / DSM 1257 / FGSC 987</strain>
    </source>
</reference>
<reference key="2">
    <citation type="journal article" date="2011" name="ACS Chem. Biol.">
        <title>Cellobiose dehydrogenase and a copper-dependent polysaccharide monooxygenase potentiate cellulose degradation by Neurospora crassa.</title>
        <authorList>
            <person name="Phillips C.M."/>
            <person name="Beeson W.T."/>
            <person name="Cate J.H."/>
            <person name="Marletta M.A."/>
        </authorList>
    </citation>
    <scope>IDENTIFICATION BY MASS SPECTROMETRY</scope>
    <scope>FUNCTION</scope>
    <scope>CATALYTIC ACTIVITY</scope>
    <scope>COFACTOR</scope>
    <scope>PATHWAY</scope>
    <scope>SUBCELLULAR LOCATION</scope>
    <scope>BIOTECHNOLOGY</scope>
    <scope>REACTION MECHANISM</scope>
    <source>
        <strain evidence="13">ATCC 24698 / 74-OR23-1A / CBS 708.71 / DSM 1257 / FGSC 987</strain>
    </source>
</reference>
<reference key="3">
    <citation type="journal article" date="2012" name="J. Am. Chem. Soc.">
        <title>Oxidative cleavage of cellulose by fungal copper-dependent polysaccharide monooxygenases.</title>
        <authorList>
            <person name="Beeson W.T."/>
            <person name="Phillips C.M."/>
            <person name="Cate J.H."/>
            <person name="Marletta M.A."/>
        </authorList>
    </citation>
    <scope>FUNCTION</scope>
    <scope>CATALYTIC ACTIVITY</scope>
    <scope>PATHWAY</scope>
    <scope>REACTION MECHANISM</scope>
    <source>
        <strain evidence="14">ATCC 24698 / 74-OR23-1A / CBS 708.71 / DSM 1257 / FGSC 987</strain>
    </source>
</reference>
<reference key="4">
    <citation type="journal article" date="2014" name="J. Am. Chem. Soc.">
        <title>Determinants of regioselective hydroxylation in the fungal polysaccharide monooxygenases.</title>
        <authorList>
            <person name="Vu V.V."/>
            <person name="Beeson W.T."/>
            <person name="Phillips C.M."/>
            <person name="Cate J.H."/>
            <person name="Marletta M.A."/>
        </authorList>
    </citation>
    <scope>FUNCTION</scope>
    <scope>CATALYTIC ACTIVITY</scope>
    <scope>PATHWAY</scope>
    <scope>REACTION MECHANISM</scope>
    <source>
        <strain evidence="16">ATCC 24698 / 74-OR23-1A / CBS 708.71 / DSM 1257 / FGSC 987</strain>
    </source>
</reference>
<reference key="5">
    <citation type="journal article" date="2017" name="Carbohydr. Res.">
        <title>Structural studies of Neurospora crassa LPMO9D and redox partner CDHIIA using neutron crystallography and small-angle scattering.</title>
        <authorList>
            <person name="Bodenheimer A.M."/>
            <person name="O'Dell W.B."/>
            <person name="Stanley C.B."/>
            <person name="Meilleur F."/>
        </authorList>
    </citation>
    <scope>CRYSTALLIZATION</scope>
    <scope>SITE</scope>
    <source>
        <strain evidence="19">ATCC 24698 / 74-OR23-1A / CBS 708.71 / DSM 1257 / FGSC 987</strain>
    </source>
</reference>
<reference key="6">
    <citation type="journal article" date="2019" name="J. Biol. Chem.">
        <title>Comparison of three seemingly similar lytic polysaccharide monooxygenases from Neurospora crassa suggests different roles in plant biomass degradation.</title>
        <authorList>
            <person name="Petrovic D.M."/>
            <person name="Varnai A."/>
            <person name="Dimarogona M."/>
            <person name="Mathiesen G."/>
            <person name="Sandgren M."/>
            <person name="Westereng B."/>
            <person name="Eijsink V.G.H."/>
        </authorList>
    </citation>
    <scope>FUNCTION</scope>
    <scope>CATALYTIC ACTIVITY</scope>
    <scope>SUBSTRATE SPECIFICITY</scope>
    <scope>ACTIVITY REGULATION</scope>
    <scope>PATHWAY</scope>
    <source>
        <strain evidence="20">ATCC 24698 / 74-OR23-1A / CBS 708.71 / DSM 1257 / FGSC 987</strain>
    </source>
</reference>
<reference key="7">
    <citation type="journal article" date="2021" name="Acta Crystallogr. F Struct. Biol. Commun.">
        <title>Preliminary results of neutron and X-ray diffraction data collection on a lytic polysaccharide monooxygenase under reduced and acidic conditions.</title>
        <authorList>
            <person name="Schroeder G.C."/>
            <person name="O'Dell W.B."/>
            <person name="Swartz P.D."/>
            <person name="Meilleur F."/>
        </authorList>
    </citation>
    <scope>CRYSTALLIZATION</scope>
    <scope>PTM</scope>
    <source>
        <strain evidence="21">ATCC 24698 / 74-OR23-1A / CBS 708.71 / DSM 1257 / FGSC 987</strain>
    </source>
</reference>
<reference evidence="28" key="8">
    <citation type="journal article" date="2012" name="Structure">
        <title>Structural basis for substrate targeting and catalysis by fungal polysaccharide monooxygenases.</title>
        <authorList>
            <person name="Li X."/>
            <person name="Beeson W.T."/>
            <person name="Phillips C.M."/>
            <person name="Marletta M.A."/>
            <person name="Cate J.H."/>
        </authorList>
    </citation>
    <scope>X-RAY CRYSTALLOGRAPHY (1.10 ANGSTROMS) OF 16-238 IN COMPLEX WITH COPPER AND MOLECULAR OXYGEN</scope>
    <scope>COFACTOR</scope>
    <scope>SUBUNIT</scope>
    <scope>SUBCELLULAR LOCATION</scope>
    <scope>PTM</scope>
    <scope>GLYCOSYLATION AT ASN-75</scope>
    <scope>DISULFIDE BONDS</scope>
    <scope>REACTION MECHANISM</scope>
    <source>
        <strain evidence="15">ATCC 24698 / 74-OR23-1A / CBS 708.71 / DSM 1257 / FGSC 987</strain>
    </source>
</reference>
<reference evidence="29 30 32" key="9">
    <citation type="journal article" date="2017" name="Acta Crystallogr. F Struct. Biol. Commun.">
        <title>Crystallization of a fungal lytic polysaccharide monooxygenase expressed from glycoengineered Pichia pastoris for X-ray and neutron diffraction.</title>
        <authorList>
            <person name="O'Dell W.B."/>
            <person name="Swartz P.D."/>
            <person name="Weiss K.L."/>
            <person name="Meilleur F."/>
        </authorList>
    </citation>
    <scope>X-RAY CRYSTALLOGRAPHY (1.20 ANGSTROMS) OF 16-238 IN COMPLEXES WITH COPPER AND MOLECULAR OXYGEN</scope>
    <scope>COFACTOR</scope>
    <scope>PTM</scope>
    <scope>GLYCOSYLATION AT ASN-75</scope>
    <scope>DISULFIDE BONDS</scope>
    <scope>MUTAGENESIS OF ASN-75</scope>
    <source>
        <strain evidence="18">ATCC 24698 / 74-OR23-1A / CBS 708.71 / DSM 1257 / FGSC 987</strain>
    </source>
</reference>
<reference evidence="30 31 32" key="10">
    <citation type="journal article" date="2017" name="Angew. Chem. Int. Ed.">
        <title>Oxygen Activation at the Active Site of a Fungal Lytic Polysaccharide Monooxygenase.</title>
        <authorList>
            <person name="O'Dell W.B."/>
            <person name="Agarwal P.K."/>
            <person name="Meilleur F."/>
        </authorList>
    </citation>
    <scope>X-RAY CRYSTALLOGRAPHY (1.20 ANGSTROMS) OF 16-238 IN COMPLEXES WITH COPPER; HYDROGEN PEROXIDE AND MOLECULAR OXYGEN</scope>
    <scope>COFACTOR</scope>
    <scope>PTM</scope>
    <scope>SITE</scope>
    <scope>GLYCOSYLATION AT ASN-75</scope>
    <scope>DISULFIDE BONDS</scope>
    <source>
        <strain evidence="17">ATCC 24698 / 74-OR23-1A / CBS 708.71 / DSM 1257 / FGSC 987</strain>
    </source>
</reference>
<reference evidence="33 34 35" key="11">
    <citation type="journal article" date="2022" name="Chem. Sci.">
        <title>Capture of activated dioxygen intermediates at the copper-active site of a lytic polysaccharide monooxygenase.</title>
        <authorList>
            <person name="Schroder G.C."/>
            <person name="O'Dell W.B."/>
            <person name="Webb S.P."/>
            <person name="Agarwal P.K."/>
            <person name="Meilleur F."/>
        </authorList>
    </citation>
    <scope>X-RAY CRYSTALLOGRAPHY (1.50 ANGSTROMS) OF 16-238 IN COMPLEXES WITH COPPER; HYDROGEN PEROXIDE AND MOLECULAR OXYGEN</scope>
    <scope>COFACTOR</scope>
    <scope>PTM</scope>
    <scope>ACTIVE SITE</scope>
    <scope>GLYCOSYLATION AT ASN-75</scope>
    <scope>DISULFIDE BONDS</scope>
    <scope>REACTION MECHANISM</scope>
    <source>
        <strain evidence="22">ATCC 24698 / 74-OR23-1A / CBS 708.71 / DSM 1257 / FGSC 987</strain>
    </source>
</reference>
<keyword id="KW-0002">3D-structure</keyword>
<keyword id="KW-0119">Carbohydrate metabolism</keyword>
<keyword id="KW-0136">Cellulose degradation</keyword>
<keyword id="KW-0186">Copper</keyword>
<keyword id="KW-1015">Disulfide bond</keyword>
<keyword id="KW-0325">Glycoprotein</keyword>
<keyword id="KW-0479">Metal-binding</keyword>
<keyword id="KW-0503">Monooxygenase</keyword>
<keyword id="KW-0560">Oxidoreductase</keyword>
<keyword id="KW-0624">Polysaccharide degradation</keyword>
<keyword id="KW-1185">Reference proteome</keyword>
<keyword id="KW-0964">Secreted</keyword>
<keyword id="KW-0732">Signal</keyword>
<accession>Q1K8B6</accession>
<sequence length="238" mass="24705">MKVLAPLVLASAASAHTIFSSLEVNGVNQGLGEGVRVPTYNGPIEDVTSASIACNGSPNTVASTSKVITVQAGTNVTAIWRYMLSTTGDSPADVMDSSHKGPTIAYLKKVDNAATASGVGNGWFKIQQDGMDSSGVWGTERVINGKGRHSIKIPECIAPGQYLLRAEMIALHAASNYPGAQFYMECAQLNVVGGTGAKTPSTVSFPGAYSGSDPGVKISIYWPPVTSYTVPGPSVFTC</sequence>
<protein>
    <recommendedName>
        <fullName evidence="17 20">Lytic polysaccharide monooxygenase NCU01050</fullName>
        <shortName evidence="17 20">LPMO NCU01050</shortName>
        <ecNumber evidence="3 4 6 10">1.14.99.56</ecNumber>
    </recommendedName>
    <alternativeName>
        <fullName evidence="26">Endoglucanase II</fullName>
    </alternativeName>
    <alternativeName>
        <fullName evidence="21 22">LPMO9D</fullName>
    </alternativeName>
    <alternativeName>
        <fullName evidence="19 20 22">NcLPMO9D</fullName>
    </alternativeName>
    <alternativeName>
        <fullName evidence="17 18 22">NcPMO-2</fullName>
    </alternativeName>
    <alternativeName>
        <fullName evidence="16">NcPMO2</fullName>
    </alternativeName>
    <alternativeName>
        <fullName evidence="15 16 18">Polysaccharide monooxygenase 2</fullName>
        <shortName evidence="15 18">PMO-2</shortName>
        <shortName evidence="16">PMO2</shortName>
    </alternativeName>
    <alternativeName>
        <fullName evidence="14">Type-2 polysaccharide monooxygenase</fullName>
        <shortName evidence="14">Type-2 PMO</shortName>
    </alternativeName>
</protein>
<proteinExistence type="evidence at protein level"/>
<gene>
    <name evidence="26" type="primary">gh61-4</name>
    <name evidence="13 14 15 16 17 20 26" type="ORF">NCU01050</name>
</gene>
<dbReference type="EC" id="1.14.99.56" evidence="3 4 6 10"/>
<dbReference type="EMBL" id="CM002240">
    <property type="protein sequence ID" value="EAA32426.1"/>
    <property type="molecule type" value="Genomic_DNA"/>
</dbReference>
<dbReference type="RefSeq" id="XP_961662.1">
    <property type="nucleotide sequence ID" value="XM_956569.1"/>
</dbReference>
<dbReference type="PDB" id="4EIR">
    <property type="method" value="X-ray"/>
    <property type="resolution" value="1.10 A"/>
    <property type="chains" value="A/B=16-238"/>
</dbReference>
<dbReference type="PDB" id="5TKF">
    <property type="method" value="X-ray"/>
    <property type="resolution" value="2.10 A"/>
    <property type="chains" value="A/B/C/D=16-238"/>
</dbReference>
<dbReference type="PDB" id="5TKG">
    <property type="method" value="X-ray"/>
    <property type="resolution" value="1.20 A"/>
    <property type="chains" value="A/B=16-238"/>
</dbReference>
<dbReference type="PDB" id="5TKH">
    <property type="method" value="X-ray"/>
    <property type="resolution" value="1.20 A"/>
    <property type="chains" value="A/B=16-238"/>
</dbReference>
<dbReference type="PDB" id="5TKI">
    <property type="method" value="Other"/>
    <property type="resolution" value="1.50 A"/>
    <property type="chains" value="A/B=16-238"/>
</dbReference>
<dbReference type="PDB" id="7T5C">
    <property type="method" value="X-ray"/>
    <property type="resolution" value="1.50 A"/>
    <property type="chains" value="A/B=16-238"/>
</dbReference>
<dbReference type="PDB" id="7T5D">
    <property type="method" value="Neutron"/>
    <property type="resolution" value="2.40 A"/>
    <property type="chains" value="A/B=16-238"/>
</dbReference>
<dbReference type="PDB" id="7T5E">
    <property type="method" value="Other"/>
    <property type="resolution" value="1.90 A"/>
    <property type="chains" value="A/B=16-238"/>
</dbReference>
<dbReference type="PDBsum" id="4EIR"/>
<dbReference type="PDBsum" id="5TKF"/>
<dbReference type="PDBsum" id="5TKG"/>
<dbReference type="PDBsum" id="5TKH"/>
<dbReference type="PDBsum" id="5TKI"/>
<dbReference type="PDBsum" id="7T5C"/>
<dbReference type="PDBsum" id="7T5D"/>
<dbReference type="PDBsum" id="7T5E"/>
<dbReference type="SMR" id="Q1K8B6"/>
<dbReference type="STRING" id="5141.EFNCRP00000004270"/>
<dbReference type="CAZy" id="AA9">
    <property type="family name" value="Auxiliary Activities 9"/>
</dbReference>
<dbReference type="GlyCosmos" id="Q1K8B6">
    <property type="glycosylation" value="1 site, No reported glycans"/>
</dbReference>
<dbReference type="PaxDb" id="5141-EFNCRP00000004270"/>
<dbReference type="EnsemblFungi" id="EAA32426">
    <property type="protein sequence ID" value="EAA32426"/>
    <property type="gene ID" value="NCU01050"/>
</dbReference>
<dbReference type="GeneID" id="3877853"/>
<dbReference type="KEGG" id="ncr:NCU01050"/>
<dbReference type="VEuPathDB" id="FungiDB:NCU01050"/>
<dbReference type="HOGENOM" id="CLU_031730_0_3_1"/>
<dbReference type="InParanoid" id="Q1K8B6"/>
<dbReference type="OMA" id="TAIWRYM"/>
<dbReference type="OrthoDB" id="5558646at2759"/>
<dbReference type="BRENDA" id="1.14.99.54">
    <property type="organism ID" value="3627"/>
</dbReference>
<dbReference type="UniPathway" id="UPA00696"/>
<dbReference type="EvolutionaryTrace" id="Q1K8B6"/>
<dbReference type="Proteomes" id="UP000001805">
    <property type="component" value="Chromosome 2, Linkage Group V"/>
</dbReference>
<dbReference type="GO" id="GO:0005576">
    <property type="term" value="C:extracellular region"/>
    <property type="evidence" value="ECO:0000314"/>
    <property type="project" value="UniProtKB"/>
</dbReference>
<dbReference type="GO" id="GO:0005507">
    <property type="term" value="F:copper ion binding"/>
    <property type="evidence" value="ECO:0000314"/>
    <property type="project" value="UniProtKB"/>
</dbReference>
<dbReference type="GO" id="GO:0004497">
    <property type="term" value="F:monooxygenase activity"/>
    <property type="evidence" value="ECO:0000314"/>
    <property type="project" value="UniProtKB"/>
</dbReference>
<dbReference type="GO" id="GO:0016705">
    <property type="term" value="F:oxidoreductase activity, acting on paired donors, with incorporation or reduction of molecular oxygen"/>
    <property type="evidence" value="ECO:0000314"/>
    <property type="project" value="UniProtKB"/>
</dbReference>
<dbReference type="GO" id="GO:0019825">
    <property type="term" value="F:oxygen binding"/>
    <property type="evidence" value="ECO:0000314"/>
    <property type="project" value="UniProtKB"/>
</dbReference>
<dbReference type="GO" id="GO:0030245">
    <property type="term" value="P:cellulose catabolic process"/>
    <property type="evidence" value="ECO:0000314"/>
    <property type="project" value="UniProtKB"/>
</dbReference>
<dbReference type="GO" id="GO:0000272">
    <property type="term" value="P:polysaccharide catabolic process"/>
    <property type="evidence" value="ECO:0000305"/>
    <property type="project" value="UniProtKB"/>
</dbReference>
<dbReference type="CDD" id="cd21175">
    <property type="entry name" value="LPMO_AA9"/>
    <property type="match status" value="1"/>
</dbReference>
<dbReference type="Gene3D" id="2.70.50.70">
    <property type="match status" value="1"/>
</dbReference>
<dbReference type="InterPro" id="IPR049892">
    <property type="entry name" value="AA9"/>
</dbReference>
<dbReference type="InterPro" id="IPR005103">
    <property type="entry name" value="AA9_LPMO"/>
</dbReference>
<dbReference type="PANTHER" id="PTHR33353:SF18">
    <property type="entry name" value="ENDOGLUCANASE II"/>
    <property type="match status" value="1"/>
</dbReference>
<dbReference type="PANTHER" id="PTHR33353">
    <property type="entry name" value="PUTATIVE (AFU_ORTHOLOGUE AFUA_1G12560)-RELATED"/>
    <property type="match status" value="1"/>
</dbReference>
<dbReference type="Pfam" id="PF03443">
    <property type="entry name" value="AA9"/>
    <property type="match status" value="1"/>
</dbReference>
<name>LPMO_NEUCR</name>